<accession>Q1J4Z3</accession>
<protein>
    <recommendedName>
        <fullName evidence="1">Deoxyribose-phosphate aldolase</fullName>
        <shortName evidence="1">DERA</shortName>
        <ecNumber evidence="1">4.1.2.4</ecNumber>
    </recommendedName>
    <alternativeName>
        <fullName evidence="1">2-deoxy-D-ribose 5-phosphate aldolase</fullName>
    </alternativeName>
    <alternativeName>
        <fullName evidence="1">Phosphodeoxyriboaldolase</fullName>
        <shortName evidence="1">Deoxyriboaldolase</shortName>
    </alternativeName>
</protein>
<sequence>MEVKDILKTVDHTLLATTATWPEIQTILDDAMAYETASACIPASYVKKAAEYVSGKLAICTVIGFPNGYSTTAAKVFECEDAIKNGADEIDMVINLTDVKNGDFDTVEEEIRQIKAACQDHILKVIVETCQLTKEELIELCGVVTRSGADFIKTSTGFSTAGATFEDVEVMAKYVGEGVKIKAAGGISSLEDAETFIALGASRLGTSRIIKIVKNEATKTDSY</sequence>
<feature type="chain" id="PRO_1000015334" description="Deoxyribose-phosphate aldolase">
    <location>
        <begin position="1"/>
        <end position="223"/>
    </location>
</feature>
<feature type="active site" description="Proton donor/acceptor" evidence="1">
    <location>
        <position position="91"/>
    </location>
</feature>
<feature type="active site" description="Schiff-base intermediate with acetaldehyde" evidence="1">
    <location>
        <position position="153"/>
    </location>
</feature>
<feature type="active site" description="Proton donor/acceptor" evidence="1">
    <location>
        <position position="182"/>
    </location>
</feature>
<name>DEOC_STRPF</name>
<gene>
    <name evidence="1" type="primary">deoC</name>
    <name type="ordered locus">MGAS10750_Spy1643</name>
</gene>
<dbReference type="EC" id="4.1.2.4" evidence="1"/>
<dbReference type="EMBL" id="CP000262">
    <property type="protein sequence ID" value="ABF38593.1"/>
    <property type="molecule type" value="Genomic_DNA"/>
</dbReference>
<dbReference type="SMR" id="Q1J4Z3"/>
<dbReference type="KEGG" id="spi:MGAS10750_Spy1643"/>
<dbReference type="HOGENOM" id="CLU_053595_0_2_9"/>
<dbReference type="UniPathway" id="UPA00002">
    <property type="reaction ID" value="UER00468"/>
</dbReference>
<dbReference type="Proteomes" id="UP000002434">
    <property type="component" value="Chromosome"/>
</dbReference>
<dbReference type="GO" id="GO:0005737">
    <property type="term" value="C:cytoplasm"/>
    <property type="evidence" value="ECO:0007669"/>
    <property type="project" value="UniProtKB-SubCell"/>
</dbReference>
<dbReference type="GO" id="GO:0004139">
    <property type="term" value="F:deoxyribose-phosphate aldolase activity"/>
    <property type="evidence" value="ECO:0007669"/>
    <property type="project" value="UniProtKB-UniRule"/>
</dbReference>
<dbReference type="GO" id="GO:0006018">
    <property type="term" value="P:2-deoxyribose 1-phosphate catabolic process"/>
    <property type="evidence" value="ECO:0007669"/>
    <property type="project" value="UniProtKB-UniRule"/>
</dbReference>
<dbReference type="GO" id="GO:0016052">
    <property type="term" value="P:carbohydrate catabolic process"/>
    <property type="evidence" value="ECO:0007669"/>
    <property type="project" value="TreeGrafter"/>
</dbReference>
<dbReference type="GO" id="GO:0009264">
    <property type="term" value="P:deoxyribonucleotide catabolic process"/>
    <property type="evidence" value="ECO:0007669"/>
    <property type="project" value="InterPro"/>
</dbReference>
<dbReference type="CDD" id="cd00959">
    <property type="entry name" value="DeoC"/>
    <property type="match status" value="1"/>
</dbReference>
<dbReference type="FunFam" id="3.20.20.70:FF:000044">
    <property type="entry name" value="Deoxyribose-phosphate aldolase"/>
    <property type="match status" value="1"/>
</dbReference>
<dbReference type="Gene3D" id="3.20.20.70">
    <property type="entry name" value="Aldolase class I"/>
    <property type="match status" value="1"/>
</dbReference>
<dbReference type="HAMAP" id="MF_00114">
    <property type="entry name" value="DeoC_type1"/>
    <property type="match status" value="1"/>
</dbReference>
<dbReference type="InterPro" id="IPR013785">
    <property type="entry name" value="Aldolase_TIM"/>
</dbReference>
<dbReference type="InterPro" id="IPR011343">
    <property type="entry name" value="DeoC"/>
</dbReference>
<dbReference type="InterPro" id="IPR002915">
    <property type="entry name" value="DeoC/FbaB/LacD_aldolase"/>
</dbReference>
<dbReference type="InterPro" id="IPR028581">
    <property type="entry name" value="DeoC_typeI"/>
</dbReference>
<dbReference type="NCBIfam" id="TIGR00126">
    <property type="entry name" value="deoC"/>
    <property type="match status" value="1"/>
</dbReference>
<dbReference type="PANTHER" id="PTHR10889">
    <property type="entry name" value="DEOXYRIBOSE-PHOSPHATE ALDOLASE"/>
    <property type="match status" value="1"/>
</dbReference>
<dbReference type="PANTHER" id="PTHR10889:SF1">
    <property type="entry name" value="DEOXYRIBOSE-PHOSPHATE ALDOLASE"/>
    <property type="match status" value="1"/>
</dbReference>
<dbReference type="Pfam" id="PF01791">
    <property type="entry name" value="DeoC"/>
    <property type="match status" value="1"/>
</dbReference>
<dbReference type="PIRSF" id="PIRSF001357">
    <property type="entry name" value="DeoC"/>
    <property type="match status" value="1"/>
</dbReference>
<dbReference type="SMART" id="SM01133">
    <property type="entry name" value="DeoC"/>
    <property type="match status" value="1"/>
</dbReference>
<dbReference type="SUPFAM" id="SSF51569">
    <property type="entry name" value="Aldolase"/>
    <property type="match status" value="1"/>
</dbReference>
<reference key="1">
    <citation type="journal article" date="2006" name="Proc. Natl. Acad. Sci. U.S.A.">
        <title>Molecular genetic anatomy of inter- and intraserotype variation in the human bacterial pathogen group A Streptococcus.</title>
        <authorList>
            <person name="Beres S.B."/>
            <person name="Richter E.W."/>
            <person name="Nagiec M.J."/>
            <person name="Sumby P."/>
            <person name="Porcella S.F."/>
            <person name="DeLeo F.R."/>
            <person name="Musser J.M."/>
        </authorList>
    </citation>
    <scope>NUCLEOTIDE SEQUENCE [LARGE SCALE GENOMIC DNA]</scope>
    <source>
        <strain>MGAS10750</strain>
    </source>
</reference>
<organism>
    <name type="scientific">Streptococcus pyogenes serotype M4 (strain MGAS10750)</name>
    <dbReference type="NCBI Taxonomy" id="370554"/>
    <lineage>
        <taxon>Bacteria</taxon>
        <taxon>Bacillati</taxon>
        <taxon>Bacillota</taxon>
        <taxon>Bacilli</taxon>
        <taxon>Lactobacillales</taxon>
        <taxon>Streptococcaceae</taxon>
        <taxon>Streptococcus</taxon>
    </lineage>
</organism>
<comment type="function">
    <text evidence="1">Catalyzes a reversible aldol reaction between acetaldehyde and D-glyceraldehyde 3-phosphate to generate 2-deoxy-D-ribose 5-phosphate.</text>
</comment>
<comment type="catalytic activity">
    <reaction evidence="1">
        <text>2-deoxy-D-ribose 5-phosphate = D-glyceraldehyde 3-phosphate + acetaldehyde</text>
        <dbReference type="Rhea" id="RHEA:12821"/>
        <dbReference type="ChEBI" id="CHEBI:15343"/>
        <dbReference type="ChEBI" id="CHEBI:59776"/>
        <dbReference type="ChEBI" id="CHEBI:62877"/>
        <dbReference type="EC" id="4.1.2.4"/>
    </reaction>
</comment>
<comment type="pathway">
    <text evidence="1">Carbohydrate degradation; 2-deoxy-D-ribose 1-phosphate degradation; D-glyceraldehyde 3-phosphate and acetaldehyde from 2-deoxy-alpha-D-ribose 1-phosphate: step 2/2.</text>
</comment>
<comment type="subcellular location">
    <subcellularLocation>
        <location evidence="1">Cytoplasm</location>
    </subcellularLocation>
</comment>
<comment type="similarity">
    <text evidence="1">Belongs to the DeoC/FbaB aldolase family. DeoC type 1 subfamily.</text>
</comment>
<proteinExistence type="inferred from homology"/>
<keyword id="KW-0963">Cytoplasm</keyword>
<keyword id="KW-0456">Lyase</keyword>
<keyword id="KW-0704">Schiff base</keyword>
<evidence type="ECO:0000255" key="1">
    <source>
        <dbReference type="HAMAP-Rule" id="MF_00114"/>
    </source>
</evidence>